<evidence type="ECO:0000255" key="1">
    <source>
        <dbReference type="HAMAP-Rule" id="MF_00109"/>
    </source>
</evidence>
<evidence type="ECO:0000305" key="2"/>
<gene>
    <name evidence="1" type="primary">aroK</name>
    <name type="ordered locus">XC_1269</name>
</gene>
<keyword id="KW-0028">Amino-acid biosynthesis</keyword>
<keyword id="KW-0057">Aromatic amino acid biosynthesis</keyword>
<keyword id="KW-0067">ATP-binding</keyword>
<keyword id="KW-0963">Cytoplasm</keyword>
<keyword id="KW-0418">Kinase</keyword>
<keyword id="KW-0460">Magnesium</keyword>
<keyword id="KW-0479">Metal-binding</keyword>
<keyword id="KW-0547">Nucleotide-binding</keyword>
<keyword id="KW-0808">Transferase</keyword>
<organism>
    <name type="scientific">Xanthomonas campestris pv. campestris (strain 8004)</name>
    <dbReference type="NCBI Taxonomy" id="314565"/>
    <lineage>
        <taxon>Bacteria</taxon>
        <taxon>Pseudomonadati</taxon>
        <taxon>Pseudomonadota</taxon>
        <taxon>Gammaproteobacteria</taxon>
        <taxon>Lysobacterales</taxon>
        <taxon>Lysobacteraceae</taxon>
        <taxon>Xanthomonas</taxon>
    </lineage>
</organism>
<reference key="1">
    <citation type="journal article" date="2005" name="Genome Res.">
        <title>Comparative and functional genomic analyses of the pathogenicity of phytopathogen Xanthomonas campestris pv. campestris.</title>
        <authorList>
            <person name="Qian W."/>
            <person name="Jia Y."/>
            <person name="Ren S.-X."/>
            <person name="He Y.-Q."/>
            <person name="Feng J.-X."/>
            <person name="Lu L.-F."/>
            <person name="Sun Q."/>
            <person name="Ying G."/>
            <person name="Tang D.-J."/>
            <person name="Tang H."/>
            <person name="Wu W."/>
            <person name="Hao P."/>
            <person name="Wang L."/>
            <person name="Jiang B.-L."/>
            <person name="Zeng S."/>
            <person name="Gu W.-Y."/>
            <person name="Lu G."/>
            <person name="Rong L."/>
            <person name="Tian Y."/>
            <person name="Yao Z."/>
            <person name="Fu G."/>
            <person name="Chen B."/>
            <person name="Fang R."/>
            <person name="Qiang B."/>
            <person name="Chen Z."/>
            <person name="Zhao G.-P."/>
            <person name="Tang J.-L."/>
            <person name="He C."/>
        </authorList>
    </citation>
    <scope>NUCLEOTIDE SEQUENCE [LARGE SCALE GENOMIC DNA]</scope>
    <source>
        <strain>8004</strain>
    </source>
</reference>
<feature type="chain" id="PRO_0000237959" description="Shikimate kinase">
    <location>
        <begin position="1"/>
        <end position="180"/>
    </location>
</feature>
<feature type="binding site" evidence="1">
    <location>
        <begin position="14"/>
        <end position="19"/>
    </location>
    <ligand>
        <name>ATP</name>
        <dbReference type="ChEBI" id="CHEBI:30616"/>
    </ligand>
</feature>
<feature type="binding site" evidence="1">
    <location>
        <position position="18"/>
    </location>
    <ligand>
        <name>Mg(2+)</name>
        <dbReference type="ChEBI" id="CHEBI:18420"/>
    </ligand>
</feature>
<feature type="binding site" evidence="1">
    <location>
        <position position="36"/>
    </location>
    <ligand>
        <name>substrate</name>
    </ligand>
</feature>
<feature type="binding site" evidence="1">
    <location>
        <position position="60"/>
    </location>
    <ligand>
        <name>substrate</name>
    </ligand>
</feature>
<feature type="binding site" evidence="1">
    <location>
        <position position="82"/>
    </location>
    <ligand>
        <name>substrate</name>
    </ligand>
</feature>
<feature type="binding site" evidence="1">
    <location>
        <position position="120"/>
    </location>
    <ligand>
        <name>ATP</name>
        <dbReference type="ChEBI" id="CHEBI:30616"/>
    </ligand>
</feature>
<feature type="binding site" evidence="1">
    <location>
        <position position="139"/>
    </location>
    <ligand>
        <name>substrate</name>
    </ligand>
</feature>
<name>AROK_XANC8</name>
<sequence>MNPAPNLVMIGPMGAGKSCIGRRLAERFGLDFVDVDQAIVEQVGSSIPAIFEQHGEARFRQHEAEALHGLLAQSNKLVSTGGGAILDAGNRQRIRERGFVVYLHVSVPAQLTRLARDRNRPLLQRPDREQVLHGMAALRTPLYQEVADLTLETDHLSPAEATAQLVLRLAAQWRMSSTPA</sequence>
<comment type="function">
    <text evidence="1">Catalyzes the specific phosphorylation of the 3-hydroxyl group of shikimic acid using ATP as a cosubstrate.</text>
</comment>
<comment type="catalytic activity">
    <reaction evidence="1">
        <text>shikimate + ATP = 3-phosphoshikimate + ADP + H(+)</text>
        <dbReference type="Rhea" id="RHEA:13121"/>
        <dbReference type="ChEBI" id="CHEBI:15378"/>
        <dbReference type="ChEBI" id="CHEBI:30616"/>
        <dbReference type="ChEBI" id="CHEBI:36208"/>
        <dbReference type="ChEBI" id="CHEBI:145989"/>
        <dbReference type="ChEBI" id="CHEBI:456216"/>
        <dbReference type="EC" id="2.7.1.71"/>
    </reaction>
</comment>
<comment type="cofactor">
    <cofactor evidence="1">
        <name>Mg(2+)</name>
        <dbReference type="ChEBI" id="CHEBI:18420"/>
    </cofactor>
    <text evidence="1">Binds 1 Mg(2+) ion per subunit.</text>
</comment>
<comment type="pathway">
    <text evidence="1">Metabolic intermediate biosynthesis; chorismate biosynthesis; chorismate from D-erythrose 4-phosphate and phosphoenolpyruvate: step 5/7.</text>
</comment>
<comment type="subunit">
    <text evidence="1">Monomer.</text>
</comment>
<comment type="subcellular location">
    <subcellularLocation>
        <location evidence="1">Cytoplasm</location>
    </subcellularLocation>
</comment>
<comment type="similarity">
    <text evidence="1">Belongs to the shikimate kinase family.</text>
</comment>
<comment type="sequence caution" evidence="2">
    <conflict type="erroneous initiation">
        <sequence resource="EMBL-CDS" id="AAY48338"/>
    </conflict>
</comment>
<dbReference type="EC" id="2.7.1.71" evidence="1"/>
<dbReference type="EMBL" id="CP000050">
    <property type="protein sequence ID" value="AAY48338.1"/>
    <property type="status" value="ALT_INIT"/>
    <property type="molecule type" value="Genomic_DNA"/>
</dbReference>
<dbReference type="RefSeq" id="WP_011037966.1">
    <property type="nucleotide sequence ID" value="NZ_CP155948.1"/>
</dbReference>
<dbReference type="SMR" id="Q4UX85"/>
<dbReference type="KEGG" id="xcb:XC_1269"/>
<dbReference type="HOGENOM" id="CLU_057607_3_2_6"/>
<dbReference type="UniPathway" id="UPA00053">
    <property type="reaction ID" value="UER00088"/>
</dbReference>
<dbReference type="Proteomes" id="UP000000420">
    <property type="component" value="Chromosome"/>
</dbReference>
<dbReference type="GO" id="GO:0005829">
    <property type="term" value="C:cytosol"/>
    <property type="evidence" value="ECO:0007669"/>
    <property type="project" value="TreeGrafter"/>
</dbReference>
<dbReference type="GO" id="GO:0005524">
    <property type="term" value="F:ATP binding"/>
    <property type="evidence" value="ECO:0007669"/>
    <property type="project" value="UniProtKB-UniRule"/>
</dbReference>
<dbReference type="GO" id="GO:0000287">
    <property type="term" value="F:magnesium ion binding"/>
    <property type="evidence" value="ECO:0007669"/>
    <property type="project" value="UniProtKB-UniRule"/>
</dbReference>
<dbReference type="GO" id="GO:0004765">
    <property type="term" value="F:shikimate kinase activity"/>
    <property type="evidence" value="ECO:0007669"/>
    <property type="project" value="UniProtKB-UniRule"/>
</dbReference>
<dbReference type="GO" id="GO:0008652">
    <property type="term" value="P:amino acid biosynthetic process"/>
    <property type="evidence" value="ECO:0007669"/>
    <property type="project" value="UniProtKB-KW"/>
</dbReference>
<dbReference type="GO" id="GO:0009073">
    <property type="term" value="P:aromatic amino acid family biosynthetic process"/>
    <property type="evidence" value="ECO:0007669"/>
    <property type="project" value="UniProtKB-KW"/>
</dbReference>
<dbReference type="GO" id="GO:0009423">
    <property type="term" value="P:chorismate biosynthetic process"/>
    <property type="evidence" value="ECO:0007669"/>
    <property type="project" value="UniProtKB-UniRule"/>
</dbReference>
<dbReference type="CDD" id="cd00464">
    <property type="entry name" value="SK"/>
    <property type="match status" value="1"/>
</dbReference>
<dbReference type="FunFam" id="3.40.50.300:FF:003942">
    <property type="entry name" value="Shikimate kinase"/>
    <property type="match status" value="1"/>
</dbReference>
<dbReference type="Gene3D" id="3.40.50.300">
    <property type="entry name" value="P-loop containing nucleotide triphosphate hydrolases"/>
    <property type="match status" value="1"/>
</dbReference>
<dbReference type="HAMAP" id="MF_00109">
    <property type="entry name" value="Shikimate_kinase"/>
    <property type="match status" value="1"/>
</dbReference>
<dbReference type="InterPro" id="IPR027417">
    <property type="entry name" value="P-loop_NTPase"/>
</dbReference>
<dbReference type="InterPro" id="IPR031322">
    <property type="entry name" value="Shikimate/glucono_kinase"/>
</dbReference>
<dbReference type="InterPro" id="IPR000623">
    <property type="entry name" value="Shikimate_kinase/TSH1"/>
</dbReference>
<dbReference type="InterPro" id="IPR023000">
    <property type="entry name" value="Shikimate_kinase_CS"/>
</dbReference>
<dbReference type="PANTHER" id="PTHR21087">
    <property type="entry name" value="SHIKIMATE KINASE"/>
    <property type="match status" value="1"/>
</dbReference>
<dbReference type="PANTHER" id="PTHR21087:SF16">
    <property type="entry name" value="SHIKIMATE KINASE 1, CHLOROPLASTIC"/>
    <property type="match status" value="1"/>
</dbReference>
<dbReference type="Pfam" id="PF01202">
    <property type="entry name" value="SKI"/>
    <property type="match status" value="1"/>
</dbReference>
<dbReference type="PRINTS" id="PR01100">
    <property type="entry name" value="SHIKIMTKNASE"/>
</dbReference>
<dbReference type="SUPFAM" id="SSF52540">
    <property type="entry name" value="P-loop containing nucleoside triphosphate hydrolases"/>
    <property type="match status" value="1"/>
</dbReference>
<dbReference type="PROSITE" id="PS01128">
    <property type="entry name" value="SHIKIMATE_KINASE"/>
    <property type="match status" value="1"/>
</dbReference>
<accession>Q4UX85</accession>
<protein>
    <recommendedName>
        <fullName evidence="1">Shikimate kinase</fullName>
        <shortName evidence="1">SK</shortName>
        <ecNumber evidence="1">2.7.1.71</ecNumber>
    </recommendedName>
</protein>
<proteinExistence type="inferred from homology"/>